<proteinExistence type="inferred from homology"/>
<gene>
    <name evidence="1" type="primary">tgt</name>
    <name type="ordered locus">Syncc9902_0267</name>
</gene>
<feature type="chain" id="PRO_1000016882" description="Queuine tRNA-ribosyltransferase">
    <location>
        <begin position="1"/>
        <end position="372"/>
    </location>
</feature>
<feature type="region of interest" description="RNA binding" evidence="1">
    <location>
        <begin position="246"/>
        <end position="252"/>
    </location>
</feature>
<feature type="region of interest" description="RNA binding; important for wobble base 34 recognition" evidence="1">
    <location>
        <begin position="270"/>
        <end position="274"/>
    </location>
</feature>
<feature type="active site" description="Proton acceptor" evidence="1">
    <location>
        <position position="92"/>
    </location>
</feature>
<feature type="active site" description="Nucleophile" evidence="1">
    <location>
        <position position="265"/>
    </location>
</feature>
<feature type="binding site" evidence="1">
    <location>
        <begin position="92"/>
        <end position="96"/>
    </location>
    <ligand>
        <name>substrate</name>
    </ligand>
</feature>
<feature type="binding site" evidence="1">
    <location>
        <position position="146"/>
    </location>
    <ligand>
        <name>substrate</name>
    </ligand>
</feature>
<feature type="binding site" evidence="1">
    <location>
        <position position="188"/>
    </location>
    <ligand>
        <name>substrate</name>
    </ligand>
</feature>
<feature type="binding site" evidence="1">
    <location>
        <position position="215"/>
    </location>
    <ligand>
        <name>substrate</name>
    </ligand>
</feature>
<feature type="binding site" evidence="1">
    <location>
        <position position="303"/>
    </location>
    <ligand>
        <name>Zn(2+)</name>
        <dbReference type="ChEBI" id="CHEBI:29105"/>
    </ligand>
</feature>
<feature type="binding site" evidence="1">
    <location>
        <position position="305"/>
    </location>
    <ligand>
        <name>Zn(2+)</name>
        <dbReference type="ChEBI" id="CHEBI:29105"/>
    </ligand>
</feature>
<feature type="binding site" evidence="1">
    <location>
        <position position="308"/>
    </location>
    <ligand>
        <name>Zn(2+)</name>
        <dbReference type="ChEBI" id="CHEBI:29105"/>
    </ligand>
</feature>
<feature type="binding site" evidence="1">
    <location>
        <position position="334"/>
    </location>
    <ligand>
        <name>Zn(2+)</name>
        <dbReference type="ChEBI" id="CHEBI:29105"/>
    </ligand>
</feature>
<dbReference type="EC" id="2.4.2.29" evidence="1"/>
<dbReference type="EMBL" id="CP000097">
    <property type="protein sequence ID" value="ABB25240.1"/>
    <property type="molecule type" value="Genomic_DNA"/>
</dbReference>
<dbReference type="RefSeq" id="WP_011359100.1">
    <property type="nucleotide sequence ID" value="NC_007513.1"/>
</dbReference>
<dbReference type="SMR" id="Q3B088"/>
<dbReference type="STRING" id="316279.Syncc9902_0267"/>
<dbReference type="KEGG" id="sye:Syncc9902_0267"/>
<dbReference type="eggNOG" id="COG0343">
    <property type="taxonomic scope" value="Bacteria"/>
</dbReference>
<dbReference type="HOGENOM" id="CLU_022060_0_1_3"/>
<dbReference type="OrthoDB" id="9805417at2"/>
<dbReference type="UniPathway" id="UPA00392"/>
<dbReference type="Proteomes" id="UP000002712">
    <property type="component" value="Chromosome"/>
</dbReference>
<dbReference type="GO" id="GO:0005829">
    <property type="term" value="C:cytosol"/>
    <property type="evidence" value="ECO:0007669"/>
    <property type="project" value="TreeGrafter"/>
</dbReference>
<dbReference type="GO" id="GO:0046872">
    <property type="term" value="F:metal ion binding"/>
    <property type="evidence" value="ECO:0007669"/>
    <property type="project" value="UniProtKB-KW"/>
</dbReference>
<dbReference type="GO" id="GO:0008479">
    <property type="term" value="F:tRNA-guanosine(34) queuine transglycosylase activity"/>
    <property type="evidence" value="ECO:0007669"/>
    <property type="project" value="UniProtKB-UniRule"/>
</dbReference>
<dbReference type="GO" id="GO:0008616">
    <property type="term" value="P:queuosine biosynthetic process"/>
    <property type="evidence" value="ECO:0007669"/>
    <property type="project" value="UniProtKB-UniRule"/>
</dbReference>
<dbReference type="GO" id="GO:0002099">
    <property type="term" value="P:tRNA wobble guanine modification"/>
    <property type="evidence" value="ECO:0007669"/>
    <property type="project" value="TreeGrafter"/>
</dbReference>
<dbReference type="GO" id="GO:0101030">
    <property type="term" value="P:tRNA-guanine transglycosylation"/>
    <property type="evidence" value="ECO:0007669"/>
    <property type="project" value="InterPro"/>
</dbReference>
<dbReference type="Gene3D" id="3.20.20.105">
    <property type="entry name" value="Queuine tRNA-ribosyltransferase-like"/>
    <property type="match status" value="1"/>
</dbReference>
<dbReference type="HAMAP" id="MF_00168">
    <property type="entry name" value="Q_tRNA_Tgt"/>
    <property type="match status" value="1"/>
</dbReference>
<dbReference type="InterPro" id="IPR050076">
    <property type="entry name" value="ArchSynthase1/Queuine_TRR"/>
</dbReference>
<dbReference type="InterPro" id="IPR004803">
    <property type="entry name" value="TGT"/>
</dbReference>
<dbReference type="InterPro" id="IPR036511">
    <property type="entry name" value="TGT-like_sf"/>
</dbReference>
<dbReference type="InterPro" id="IPR002616">
    <property type="entry name" value="tRNA_ribo_trans-like"/>
</dbReference>
<dbReference type="NCBIfam" id="TIGR00430">
    <property type="entry name" value="Q_tRNA_tgt"/>
    <property type="match status" value="1"/>
</dbReference>
<dbReference type="NCBIfam" id="TIGR00449">
    <property type="entry name" value="tgt_general"/>
    <property type="match status" value="1"/>
</dbReference>
<dbReference type="PANTHER" id="PTHR46499">
    <property type="entry name" value="QUEUINE TRNA-RIBOSYLTRANSFERASE"/>
    <property type="match status" value="1"/>
</dbReference>
<dbReference type="PANTHER" id="PTHR46499:SF1">
    <property type="entry name" value="QUEUINE TRNA-RIBOSYLTRANSFERASE"/>
    <property type="match status" value="1"/>
</dbReference>
<dbReference type="Pfam" id="PF01702">
    <property type="entry name" value="TGT"/>
    <property type="match status" value="1"/>
</dbReference>
<dbReference type="SUPFAM" id="SSF51713">
    <property type="entry name" value="tRNA-guanine transglycosylase"/>
    <property type="match status" value="1"/>
</dbReference>
<name>TGT_SYNS9</name>
<comment type="function">
    <text evidence="1">Catalyzes the base-exchange of a guanine (G) residue with the queuine precursor 7-aminomethyl-7-deazaguanine (PreQ1) at position 34 (anticodon wobble position) in tRNAs with GU(N) anticodons (tRNA-Asp, -Asn, -His and -Tyr). Catalysis occurs through a double-displacement mechanism. The nucleophile active site attacks the C1' of nucleotide 34 to detach the guanine base from the RNA, forming a covalent enzyme-RNA intermediate. The proton acceptor active site deprotonates the incoming PreQ1, allowing a nucleophilic attack on the C1' of the ribose to form the product. After dissociation, two additional enzymatic reactions on the tRNA convert PreQ1 to queuine (Q), resulting in the hypermodified nucleoside queuosine (7-(((4,5-cis-dihydroxy-2-cyclopenten-1-yl)amino)methyl)-7-deazaguanosine).</text>
</comment>
<comment type="catalytic activity">
    <reaction evidence="1">
        <text>7-aminomethyl-7-carbaguanine + guanosine(34) in tRNA = 7-aminomethyl-7-carbaguanosine(34) in tRNA + guanine</text>
        <dbReference type="Rhea" id="RHEA:24104"/>
        <dbReference type="Rhea" id="RHEA-COMP:10341"/>
        <dbReference type="Rhea" id="RHEA-COMP:10342"/>
        <dbReference type="ChEBI" id="CHEBI:16235"/>
        <dbReference type="ChEBI" id="CHEBI:58703"/>
        <dbReference type="ChEBI" id="CHEBI:74269"/>
        <dbReference type="ChEBI" id="CHEBI:82833"/>
        <dbReference type="EC" id="2.4.2.29"/>
    </reaction>
</comment>
<comment type="cofactor">
    <cofactor evidence="1">
        <name>Zn(2+)</name>
        <dbReference type="ChEBI" id="CHEBI:29105"/>
    </cofactor>
    <text evidence="1">Binds 1 zinc ion per subunit.</text>
</comment>
<comment type="pathway">
    <text evidence="1">tRNA modification; tRNA-queuosine biosynthesis.</text>
</comment>
<comment type="subunit">
    <text evidence="1">Homodimer. Within each dimer, one monomer is responsible for RNA recognition and catalysis, while the other monomer binds to the replacement base PreQ1.</text>
</comment>
<comment type="similarity">
    <text evidence="1">Belongs to the queuine tRNA-ribosyltransferase family.</text>
</comment>
<sequence>MFNFEISAHCPHTKGRCGCFHTPHGPVQTPRFMPVGTLATVKGISTEQLARTGAQMVLSNTYHLHLQPGEQVVAEAGGLHRFMGWDGPMLTDSGGFQVFSLGNLNKIDERGVVFRNPRDGRTIDMTPEHATNIQMALGADVAMAFDQCPPYPATENDVKDACRRTHAWLERCVNAHTRSDQALFGIVQGGCFPHLRRESARAVAAFDLPGIAIGGVSVGEPTDDMHRIVRDIGPLLPLDRPRYLMGIGTLREMAVAVANGIDLFDCVLPTRLGRHGTALVGGERWNLRNARFRNDHTPLDSSCSCLACTGHSRAYIHHLIRSDELLGLTLLSLHNITHLVRFTNAMAQAIQDGCFSEDFAPWQEDSPAHHTW</sequence>
<protein>
    <recommendedName>
        <fullName evidence="1">Queuine tRNA-ribosyltransferase</fullName>
        <ecNumber evidence="1">2.4.2.29</ecNumber>
    </recommendedName>
    <alternativeName>
        <fullName evidence="1">Guanine insertion enzyme</fullName>
    </alternativeName>
    <alternativeName>
        <fullName evidence="1">tRNA-guanine transglycosylase</fullName>
    </alternativeName>
</protein>
<evidence type="ECO:0000255" key="1">
    <source>
        <dbReference type="HAMAP-Rule" id="MF_00168"/>
    </source>
</evidence>
<reference key="1">
    <citation type="submission" date="2005-08" db="EMBL/GenBank/DDBJ databases">
        <title>Complete sequence of Synechococcus sp. CC9902.</title>
        <authorList>
            <person name="Copeland A."/>
            <person name="Lucas S."/>
            <person name="Lapidus A."/>
            <person name="Barry K."/>
            <person name="Detter J.C."/>
            <person name="Glavina T."/>
            <person name="Hammon N."/>
            <person name="Israni S."/>
            <person name="Pitluck S."/>
            <person name="Martinez M."/>
            <person name="Schmutz J."/>
            <person name="Larimer F."/>
            <person name="Land M."/>
            <person name="Kyrpides N."/>
            <person name="Ivanova N."/>
            <person name="Richardson P."/>
        </authorList>
    </citation>
    <scope>NUCLEOTIDE SEQUENCE [LARGE SCALE GENOMIC DNA]</scope>
    <source>
        <strain>CC9902</strain>
    </source>
</reference>
<keyword id="KW-0328">Glycosyltransferase</keyword>
<keyword id="KW-0479">Metal-binding</keyword>
<keyword id="KW-0671">Queuosine biosynthesis</keyword>
<keyword id="KW-1185">Reference proteome</keyword>
<keyword id="KW-0808">Transferase</keyword>
<keyword id="KW-0819">tRNA processing</keyword>
<keyword id="KW-0862">Zinc</keyword>
<accession>Q3B088</accession>
<organism>
    <name type="scientific">Synechococcus sp. (strain CC9902)</name>
    <dbReference type="NCBI Taxonomy" id="316279"/>
    <lineage>
        <taxon>Bacteria</taxon>
        <taxon>Bacillati</taxon>
        <taxon>Cyanobacteriota</taxon>
        <taxon>Cyanophyceae</taxon>
        <taxon>Synechococcales</taxon>
        <taxon>Synechococcaceae</taxon>
        <taxon>Synechococcus</taxon>
    </lineage>
</organism>